<evidence type="ECO:0000250" key="1"/>
<evidence type="ECO:0000250" key="2">
    <source>
        <dbReference type="UniProtKB" id="P14743"/>
    </source>
</evidence>
<evidence type="ECO:0000305" key="3"/>
<reference key="1">
    <citation type="journal article" date="2004" name="Science">
        <title>The Ashbya gossypii genome as a tool for mapping the ancient Saccharomyces cerevisiae genome.</title>
        <authorList>
            <person name="Dietrich F.S."/>
            <person name="Voegeli S."/>
            <person name="Brachat S."/>
            <person name="Lerch A."/>
            <person name="Gates K."/>
            <person name="Steiner S."/>
            <person name="Mohr C."/>
            <person name="Poehlmann R."/>
            <person name="Luedi P."/>
            <person name="Choi S."/>
            <person name="Wing R.A."/>
            <person name="Flavier A."/>
            <person name="Gaffney T.D."/>
            <person name="Philippsen P."/>
        </authorList>
    </citation>
    <scope>NUCLEOTIDE SEQUENCE [LARGE SCALE GENOMIC DNA]</scope>
    <source>
        <strain>ATCC 10895 / CBS 109.51 / FGSC 9923 / NRRL Y-1056</strain>
    </source>
</reference>
<reference key="2">
    <citation type="journal article" date="2013" name="G3 (Bethesda)">
        <title>Genomes of Ashbya fungi isolated from insects reveal four mating-type loci, numerous translocations, lack of transposons, and distinct gene duplications.</title>
        <authorList>
            <person name="Dietrich F.S."/>
            <person name="Voegeli S."/>
            <person name="Kuo S."/>
            <person name="Philippsen P."/>
        </authorList>
    </citation>
    <scope>GENOME REANNOTATION</scope>
    <source>
        <strain>ATCC 10895 / CBS 109.51 / FGSC 9923 / NRRL Y-1056</strain>
    </source>
</reference>
<name>NMT_EREGS</name>
<protein>
    <recommendedName>
        <fullName>Glycylpeptide N-tetradecanoyltransferase</fullName>
        <ecNumber>2.3.1.97</ecNumber>
    </recommendedName>
    <alternativeName>
        <fullName>Myristoyl-CoA:protein N-myristoyltransferase</fullName>
        <shortName>NMT</shortName>
    </alternativeName>
    <alternativeName>
        <fullName>Peptide N-myristoyltransferase</fullName>
    </alternativeName>
</protein>
<comment type="function">
    <text evidence="1">Adds a myristoyl group to the N-terminal glycine residue of certain cellular proteins.</text>
</comment>
<comment type="catalytic activity">
    <reaction>
        <text>N-terminal glycyl-[protein] + tetradecanoyl-CoA = N-tetradecanoylglycyl-[protein] + CoA + H(+)</text>
        <dbReference type="Rhea" id="RHEA:15521"/>
        <dbReference type="Rhea" id="RHEA-COMP:12666"/>
        <dbReference type="Rhea" id="RHEA-COMP:12667"/>
        <dbReference type="ChEBI" id="CHEBI:15378"/>
        <dbReference type="ChEBI" id="CHEBI:57287"/>
        <dbReference type="ChEBI" id="CHEBI:57385"/>
        <dbReference type="ChEBI" id="CHEBI:64723"/>
        <dbReference type="ChEBI" id="CHEBI:133050"/>
        <dbReference type="EC" id="2.3.1.97"/>
    </reaction>
</comment>
<comment type="subunit">
    <text evidence="1">Monomer.</text>
</comment>
<comment type="subcellular location">
    <subcellularLocation>
        <location evidence="1">Cytoplasm</location>
    </subcellularLocation>
</comment>
<comment type="similarity">
    <text evidence="3">Belongs to the NMT family.</text>
</comment>
<dbReference type="EC" id="2.3.1.97"/>
<dbReference type="EMBL" id="AE016814">
    <property type="protein sequence ID" value="AAS50442.1"/>
    <property type="molecule type" value="Genomic_DNA"/>
</dbReference>
<dbReference type="RefSeq" id="NP_982618.1">
    <property type="nucleotide sequence ID" value="NM_207971.1"/>
</dbReference>
<dbReference type="SMR" id="Q75EK2"/>
<dbReference type="FunCoup" id="Q75EK2">
    <property type="interactions" value="976"/>
</dbReference>
<dbReference type="STRING" id="284811.Q75EK2"/>
<dbReference type="EnsemblFungi" id="AAS50442">
    <property type="protein sequence ID" value="AAS50442"/>
    <property type="gene ID" value="AGOS_AAR077C"/>
</dbReference>
<dbReference type="GeneID" id="4618539"/>
<dbReference type="KEGG" id="ago:AGOS_AAR077C"/>
<dbReference type="eggNOG" id="KOG2779">
    <property type="taxonomic scope" value="Eukaryota"/>
</dbReference>
<dbReference type="HOGENOM" id="CLU_022882_2_0_1"/>
<dbReference type="InParanoid" id="Q75EK2"/>
<dbReference type="OMA" id="GWKRDWH"/>
<dbReference type="OrthoDB" id="60315at2759"/>
<dbReference type="Proteomes" id="UP000000591">
    <property type="component" value="Chromosome I"/>
</dbReference>
<dbReference type="GO" id="GO:0005829">
    <property type="term" value="C:cytosol"/>
    <property type="evidence" value="ECO:0000318"/>
    <property type="project" value="GO_Central"/>
</dbReference>
<dbReference type="GO" id="GO:0004379">
    <property type="term" value="F:glycylpeptide N-tetradecanoyltransferase activity"/>
    <property type="evidence" value="ECO:0000318"/>
    <property type="project" value="GO_Central"/>
</dbReference>
<dbReference type="GO" id="GO:0072657">
    <property type="term" value="P:protein localization to membrane"/>
    <property type="evidence" value="ECO:0000318"/>
    <property type="project" value="GO_Central"/>
</dbReference>
<dbReference type="FunFam" id="3.40.630.30:FF:000042">
    <property type="entry name" value="Glycylpeptide N-tetradecanoyltransferase"/>
    <property type="match status" value="1"/>
</dbReference>
<dbReference type="FunFam" id="3.40.630.30:FF:000056">
    <property type="entry name" value="Glycylpeptide N-tetradecanoyltransferase"/>
    <property type="match status" value="1"/>
</dbReference>
<dbReference type="Gene3D" id="3.40.630.30">
    <property type="match status" value="2"/>
</dbReference>
<dbReference type="InterPro" id="IPR016181">
    <property type="entry name" value="Acyl_CoA_acyltransferase"/>
</dbReference>
<dbReference type="InterPro" id="IPR000903">
    <property type="entry name" value="NMT"/>
</dbReference>
<dbReference type="InterPro" id="IPR022677">
    <property type="entry name" value="NMT_C"/>
</dbReference>
<dbReference type="InterPro" id="IPR022678">
    <property type="entry name" value="NMT_CS"/>
</dbReference>
<dbReference type="InterPro" id="IPR022676">
    <property type="entry name" value="NMT_N"/>
</dbReference>
<dbReference type="PANTHER" id="PTHR11377:SF5">
    <property type="entry name" value="GLYCYLPEPTIDE N-TETRADECANOYLTRANSFERASE"/>
    <property type="match status" value="1"/>
</dbReference>
<dbReference type="PANTHER" id="PTHR11377">
    <property type="entry name" value="N-MYRISTOYL TRANSFERASE"/>
    <property type="match status" value="1"/>
</dbReference>
<dbReference type="Pfam" id="PF01233">
    <property type="entry name" value="NMT"/>
    <property type="match status" value="1"/>
</dbReference>
<dbReference type="Pfam" id="PF02799">
    <property type="entry name" value="NMT_C"/>
    <property type="match status" value="1"/>
</dbReference>
<dbReference type="PIRSF" id="PIRSF015892">
    <property type="entry name" value="N-myristl_transf"/>
    <property type="match status" value="1"/>
</dbReference>
<dbReference type="SUPFAM" id="SSF55729">
    <property type="entry name" value="Acyl-CoA N-acyltransferases (Nat)"/>
    <property type="match status" value="2"/>
</dbReference>
<dbReference type="PROSITE" id="PS00975">
    <property type="entry name" value="NMT_1"/>
    <property type="match status" value="1"/>
</dbReference>
<dbReference type="PROSITE" id="PS00976">
    <property type="entry name" value="NMT_2"/>
    <property type="match status" value="1"/>
</dbReference>
<organism>
    <name type="scientific">Eremothecium gossypii (strain ATCC 10895 / CBS 109.51 / FGSC 9923 / NRRL Y-1056)</name>
    <name type="common">Yeast</name>
    <name type="synonym">Ashbya gossypii</name>
    <dbReference type="NCBI Taxonomy" id="284811"/>
    <lineage>
        <taxon>Eukaryota</taxon>
        <taxon>Fungi</taxon>
        <taxon>Dikarya</taxon>
        <taxon>Ascomycota</taxon>
        <taxon>Saccharomycotina</taxon>
        <taxon>Saccharomycetes</taxon>
        <taxon>Saccharomycetales</taxon>
        <taxon>Saccharomycetaceae</taxon>
        <taxon>Eremothecium</taxon>
    </lineage>
</organism>
<sequence>MGDSGDAQKMQRLLEMLALNSGDMSKLTQQQRKAFEEYKFWKTQPVARFDEKVEEEGPINPPRRVEDVRDEPYPLLEEFEWRTMDITTGQDLEDVFVLLNENYIEDKDSTFRFNYTREFFNWALKPPGWRKEWHVGVRVRQSGRLVAFISAVPTTLEVRGREMKSVEINFLCIHKKLRSKRLAPILIKEITRRVNKCDIWHALYSAGIVLPSPISTCRYTHRPLNWSKLFDVGFTALPANATKTQMLAKYTLPKKPLVEGLRPMTDADVDGAFDLFNRYQKRFELIQTFDKSEFRHWFLGNEETPSVIYSYVVQNSEGKITDFVSFYSLPFTILKNPLHKELGIGYLFYYASDADFDYEDRYDPTATELLRKRLTQLINDVCILARDLKMDVFNALTSQDNALFLEDLKFGPGDGFLNFYLFNYRANPIRGGLTEDKKFDAKNRSNQGVVML</sequence>
<proteinExistence type="inferred from homology"/>
<gene>
    <name type="primary">NMT1</name>
    <name type="ordered locus">AAR077C</name>
</gene>
<accession>Q75EK2</accession>
<keyword id="KW-0012">Acyltransferase</keyword>
<keyword id="KW-0963">Cytoplasm</keyword>
<keyword id="KW-1185">Reference proteome</keyword>
<keyword id="KW-0808">Transferase</keyword>
<feature type="chain" id="PRO_0000064234" description="Glycylpeptide N-tetradecanoyltransferase">
    <location>
        <begin position="1"/>
        <end position="452"/>
    </location>
</feature>
<feature type="active site" description="Proton acceptor; via carboxylate" evidence="1">
    <location>
        <position position="452"/>
    </location>
</feature>
<feature type="binding site" evidence="2">
    <location>
        <begin position="38"/>
        <end position="41"/>
    </location>
    <ligand>
        <name>tetradecanoyl-CoA</name>
        <dbReference type="ChEBI" id="CHEBI:57385"/>
    </ligand>
</feature>
<feature type="binding site" evidence="2">
    <location>
        <begin position="171"/>
        <end position="173"/>
    </location>
    <ligand>
        <name>tetradecanoyl-CoA</name>
        <dbReference type="ChEBI" id="CHEBI:57385"/>
    </ligand>
</feature>
<feature type="binding site" evidence="2">
    <location>
        <begin position="179"/>
        <end position="183"/>
    </location>
    <ligand>
        <name>tetradecanoyl-CoA</name>
        <dbReference type="ChEBI" id="CHEBI:57385"/>
    </ligand>
</feature>